<comment type="function">
    <text evidence="2">GTP hydrolase that promotes the GTP-dependent binding of aminoacyl-tRNA to the A-site of ribosomes during protein biosynthesis.</text>
</comment>
<comment type="catalytic activity">
    <reaction evidence="2">
        <text>GTP + H2O = GDP + phosphate + H(+)</text>
        <dbReference type="Rhea" id="RHEA:19669"/>
        <dbReference type="ChEBI" id="CHEBI:15377"/>
        <dbReference type="ChEBI" id="CHEBI:15378"/>
        <dbReference type="ChEBI" id="CHEBI:37565"/>
        <dbReference type="ChEBI" id="CHEBI:43474"/>
        <dbReference type="ChEBI" id="CHEBI:58189"/>
        <dbReference type="EC" id="3.6.5.3"/>
    </reaction>
    <physiologicalReaction direction="left-to-right" evidence="2">
        <dbReference type="Rhea" id="RHEA:19670"/>
    </physiologicalReaction>
</comment>
<comment type="subunit">
    <text evidence="2">Monomer.</text>
</comment>
<comment type="subcellular location">
    <subcellularLocation>
        <location>Cytoplasm</location>
    </subcellularLocation>
</comment>
<comment type="similarity">
    <text evidence="2">Belongs to the TRAFAC class translation factor GTPase superfamily. Classic translation factor GTPase family. EF-Tu/EF-1A subfamily.</text>
</comment>
<protein>
    <recommendedName>
        <fullName evidence="2">Elongation factor Tu</fullName>
        <shortName evidence="2">EF-Tu</shortName>
        <ecNumber evidence="2">3.6.5.3</ecNumber>
    </recommendedName>
</protein>
<sequence length="395" mass="43290">MAKAKFERTKPHVNIGTIGHVDHGKTTLTAAITTVLAKQGKAEAKAYDQIDAAPEERERGITISTAHVEYETEARHYAHVDCPGHADYVKNMITGAAQMDGAILVVSAADGPMPQTREHILLSRQVGVPYIVVFLNKCDMVDDEELLELVEMEVRDLLSEYDFPGDEVPVIKGSALKALEGDPKWEEKIIELMNAVDEYIPTPQREVDKPFMMPIEDVFSITGRGTVATGRVERGTLKVGDPVEIIGLSDEPKATTVTGVEMFRKLLDQAEAGDNIGALLRGVSRDEVERGQVLAKPGSITPHTKFKAQVYVLTKEEGGRHTPFFSNYRPQFYFRTTDVTGIITLPEGVEMVMPGDNVEMTVELIAPIAIEEGTKFSIREGGRTVGAGSVSEIIE</sequence>
<reference key="1">
    <citation type="journal article" date="1998" name="J. Mol. Biol.">
        <title>Structure and expression of elongation factor Tu from Bacillus stearothermophilus.</title>
        <authorList>
            <person name="Krasny L."/>
            <person name="Mesters J.R."/>
            <person name="Tieleman L.N."/>
            <person name="Kraal B."/>
            <person name="Fucik V."/>
            <person name="Hilgenfeld R."/>
            <person name="Jonak J."/>
        </authorList>
    </citation>
    <scope>NUCLEOTIDE SEQUENCE [GENOMIC DNA]</scope>
    <source>
        <strain>ATCC 12977 / CCM 2184 / NCA 1492 / NCIMB 8920 / NRS T2026</strain>
    </source>
</reference>
<accession>O50306</accession>
<gene>
    <name evidence="2" type="primary">tuf</name>
</gene>
<name>EFTU_GEOSE</name>
<feature type="chain" id="PRO_0000091290" description="Elongation factor Tu">
    <location>
        <begin position="1"/>
        <end position="395"/>
    </location>
</feature>
<feature type="domain" description="tr-type G">
    <location>
        <begin position="10"/>
        <end position="204"/>
    </location>
</feature>
<feature type="region of interest" description="G1" evidence="1">
    <location>
        <begin position="19"/>
        <end position="26"/>
    </location>
</feature>
<feature type="region of interest" description="G2" evidence="1">
    <location>
        <begin position="60"/>
        <end position="64"/>
    </location>
</feature>
<feature type="region of interest" description="G3" evidence="1">
    <location>
        <begin position="81"/>
        <end position="84"/>
    </location>
</feature>
<feature type="region of interest" description="G4" evidence="1">
    <location>
        <begin position="136"/>
        <end position="139"/>
    </location>
</feature>
<feature type="region of interest" description="G5" evidence="1">
    <location>
        <begin position="174"/>
        <end position="176"/>
    </location>
</feature>
<feature type="binding site" evidence="2">
    <location>
        <begin position="19"/>
        <end position="26"/>
    </location>
    <ligand>
        <name>GTP</name>
        <dbReference type="ChEBI" id="CHEBI:37565"/>
    </ligand>
</feature>
<feature type="binding site" evidence="2">
    <location>
        <position position="26"/>
    </location>
    <ligand>
        <name>Mg(2+)</name>
        <dbReference type="ChEBI" id="CHEBI:18420"/>
    </ligand>
</feature>
<feature type="binding site" evidence="2">
    <location>
        <begin position="81"/>
        <end position="85"/>
    </location>
    <ligand>
        <name>GTP</name>
        <dbReference type="ChEBI" id="CHEBI:37565"/>
    </ligand>
</feature>
<feature type="binding site" evidence="2">
    <location>
        <begin position="136"/>
        <end position="139"/>
    </location>
    <ligand>
        <name>GTP</name>
        <dbReference type="ChEBI" id="CHEBI:37565"/>
    </ligand>
</feature>
<keyword id="KW-0963">Cytoplasm</keyword>
<keyword id="KW-0251">Elongation factor</keyword>
<keyword id="KW-0342">GTP-binding</keyword>
<keyword id="KW-0378">Hydrolase</keyword>
<keyword id="KW-0460">Magnesium</keyword>
<keyword id="KW-0479">Metal-binding</keyword>
<keyword id="KW-0547">Nucleotide-binding</keyword>
<keyword id="KW-0648">Protein biosynthesis</keyword>
<proteinExistence type="inferred from homology"/>
<evidence type="ECO:0000250" key="1"/>
<evidence type="ECO:0000255" key="2">
    <source>
        <dbReference type="HAMAP-Rule" id="MF_00118"/>
    </source>
</evidence>
<organism>
    <name type="scientific">Geobacillus stearothermophilus</name>
    <name type="common">Bacillus stearothermophilus</name>
    <dbReference type="NCBI Taxonomy" id="1422"/>
    <lineage>
        <taxon>Bacteria</taxon>
        <taxon>Bacillati</taxon>
        <taxon>Bacillota</taxon>
        <taxon>Bacilli</taxon>
        <taxon>Bacillales</taxon>
        <taxon>Anoxybacillaceae</taxon>
        <taxon>Geobacillus</taxon>
    </lineage>
</organism>
<dbReference type="EC" id="3.6.5.3" evidence="2"/>
<dbReference type="EMBL" id="AJ000260">
    <property type="protein sequence ID" value="CAA03976.1"/>
    <property type="molecule type" value="Genomic_DNA"/>
</dbReference>
<dbReference type="RefSeq" id="WP_033017243.1">
    <property type="nucleotide sequence ID" value="NZ_RCTK01000011.1"/>
</dbReference>
<dbReference type="SMR" id="O50306"/>
<dbReference type="GeneID" id="89612902"/>
<dbReference type="OrthoDB" id="9804504at2"/>
<dbReference type="GO" id="GO:0005829">
    <property type="term" value="C:cytosol"/>
    <property type="evidence" value="ECO:0007669"/>
    <property type="project" value="TreeGrafter"/>
</dbReference>
<dbReference type="GO" id="GO:0005525">
    <property type="term" value="F:GTP binding"/>
    <property type="evidence" value="ECO:0007669"/>
    <property type="project" value="UniProtKB-UniRule"/>
</dbReference>
<dbReference type="GO" id="GO:0003924">
    <property type="term" value="F:GTPase activity"/>
    <property type="evidence" value="ECO:0007669"/>
    <property type="project" value="InterPro"/>
</dbReference>
<dbReference type="GO" id="GO:0003746">
    <property type="term" value="F:translation elongation factor activity"/>
    <property type="evidence" value="ECO:0007669"/>
    <property type="project" value="UniProtKB-UniRule"/>
</dbReference>
<dbReference type="CDD" id="cd01884">
    <property type="entry name" value="EF_Tu"/>
    <property type="match status" value="1"/>
</dbReference>
<dbReference type="CDD" id="cd03697">
    <property type="entry name" value="EFTU_II"/>
    <property type="match status" value="1"/>
</dbReference>
<dbReference type="CDD" id="cd03707">
    <property type="entry name" value="EFTU_III"/>
    <property type="match status" value="1"/>
</dbReference>
<dbReference type="FunFam" id="2.40.30.10:FF:000001">
    <property type="entry name" value="Elongation factor Tu"/>
    <property type="match status" value="1"/>
</dbReference>
<dbReference type="FunFam" id="3.40.50.300:FF:000003">
    <property type="entry name" value="Elongation factor Tu"/>
    <property type="match status" value="1"/>
</dbReference>
<dbReference type="Gene3D" id="3.40.50.300">
    <property type="entry name" value="P-loop containing nucleotide triphosphate hydrolases"/>
    <property type="match status" value="1"/>
</dbReference>
<dbReference type="Gene3D" id="2.40.30.10">
    <property type="entry name" value="Translation factors"/>
    <property type="match status" value="2"/>
</dbReference>
<dbReference type="HAMAP" id="MF_00118_B">
    <property type="entry name" value="EF_Tu_B"/>
    <property type="match status" value="1"/>
</dbReference>
<dbReference type="InterPro" id="IPR041709">
    <property type="entry name" value="EF-Tu_GTP-bd"/>
</dbReference>
<dbReference type="InterPro" id="IPR050055">
    <property type="entry name" value="EF-Tu_GTPase"/>
</dbReference>
<dbReference type="InterPro" id="IPR004161">
    <property type="entry name" value="EFTu-like_2"/>
</dbReference>
<dbReference type="InterPro" id="IPR033720">
    <property type="entry name" value="EFTU_2"/>
</dbReference>
<dbReference type="InterPro" id="IPR031157">
    <property type="entry name" value="G_TR_CS"/>
</dbReference>
<dbReference type="InterPro" id="IPR027417">
    <property type="entry name" value="P-loop_NTPase"/>
</dbReference>
<dbReference type="InterPro" id="IPR005225">
    <property type="entry name" value="Small_GTP-bd"/>
</dbReference>
<dbReference type="InterPro" id="IPR000795">
    <property type="entry name" value="T_Tr_GTP-bd_dom"/>
</dbReference>
<dbReference type="InterPro" id="IPR009000">
    <property type="entry name" value="Transl_B-barrel_sf"/>
</dbReference>
<dbReference type="InterPro" id="IPR009001">
    <property type="entry name" value="Transl_elong_EF1A/Init_IF2_C"/>
</dbReference>
<dbReference type="InterPro" id="IPR004541">
    <property type="entry name" value="Transl_elong_EFTu/EF1A_bac/org"/>
</dbReference>
<dbReference type="InterPro" id="IPR004160">
    <property type="entry name" value="Transl_elong_EFTu/EF1A_C"/>
</dbReference>
<dbReference type="NCBIfam" id="TIGR00485">
    <property type="entry name" value="EF-Tu"/>
    <property type="match status" value="1"/>
</dbReference>
<dbReference type="NCBIfam" id="NF000766">
    <property type="entry name" value="PRK00049.1"/>
    <property type="match status" value="1"/>
</dbReference>
<dbReference type="NCBIfam" id="NF009372">
    <property type="entry name" value="PRK12735.1"/>
    <property type="match status" value="1"/>
</dbReference>
<dbReference type="NCBIfam" id="NF009373">
    <property type="entry name" value="PRK12736.1"/>
    <property type="match status" value="1"/>
</dbReference>
<dbReference type="NCBIfam" id="TIGR00231">
    <property type="entry name" value="small_GTP"/>
    <property type="match status" value="1"/>
</dbReference>
<dbReference type="PANTHER" id="PTHR43721:SF22">
    <property type="entry name" value="ELONGATION FACTOR TU, MITOCHONDRIAL"/>
    <property type="match status" value="1"/>
</dbReference>
<dbReference type="PANTHER" id="PTHR43721">
    <property type="entry name" value="ELONGATION FACTOR TU-RELATED"/>
    <property type="match status" value="1"/>
</dbReference>
<dbReference type="Pfam" id="PF00009">
    <property type="entry name" value="GTP_EFTU"/>
    <property type="match status" value="1"/>
</dbReference>
<dbReference type="Pfam" id="PF03144">
    <property type="entry name" value="GTP_EFTU_D2"/>
    <property type="match status" value="1"/>
</dbReference>
<dbReference type="Pfam" id="PF03143">
    <property type="entry name" value="GTP_EFTU_D3"/>
    <property type="match status" value="1"/>
</dbReference>
<dbReference type="PRINTS" id="PR00315">
    <property type="entry name" value="ELONGATNFCT"/>
</dbReference>
<dbReference type="SUPFAM" id="SSF50465">
    <property type="entry name" value="EF-Tu/eEF-1alpha/eIF2-gamma C-terminal domain"/>
    <property type="match status" value="1"/>
</dbReference>
<dbReference type="SUPFAM" id="SSF52540">
    <property type="entry name" value="P-loop containing nucleoside triphosphate hydrolases"/>
    <property type="match status" value="1"/>
</dbReference>
<dbReference type="SUPFAM" id="SSF50447">
    <property type="entry name" value="Translation proteins"/>
    <property type="match status" value="1"/>
</dbReference>
<dbReference type="PROSITE" id="PS00301">
    <property type="entry name" value="G_TR_1"/>
    <property type="match status" value="1"/>
</dbReference>
<dbReference type="PROSITE" id="PS51722">
    <property type="entry name" value="G_TR_2"/>
    <property type="match status" value="1"/>
</dbReference>